<comment type="function">
    <text evidence="1 2 3">The MdtABC tripartite complex confers resistance against novobiocin and deoxycholate. MdtABC requires TolC for its function.</text>
</comment>
<comment type="subunit">
    <text>Part of a tripartite efflux system composed of MdtA, MdtB and MdtC. MdtB forms a heteromultimer with MdtC.</text>
</comment>
<comment type="interaction">
    <interactant intactId="EBI-561416">
        <id>P76398</id>
    </interactant>
    <interactant intactId="EBI-1116694">
        <id>P76399</id>
        <label>mdtC</label>
    </interactant>
    <organismsDiffer>false</organismsDiffer>
    <experiments>4</experiments>
</comment>
<comment type="subcellular location">
    <subcellularLocation>
        <location evidence="1">Cell inner membrane</location>
        <topology evidence="1">Multi-pass membrane protein</topology>
    </subcellularLocation>
</comment>
<comment type="induction">
    <text evidence="1 2 3">The mdtABC operon is transcriptionally activated by BaeR.</text>
</comment>
<comment type="similarity">
    <text evidence="1">Belongs to the resistance-nodulation-cell division (RND) (TC 2.A.6) family. MdtB subfamily.</text>
</comment>
<organism>
    <name type="scientific">Escherichia coli (strain K12)</name>
    <dbReference type="NCBI Taxonomy" id="83333"/>
    <lineage>
        <taxon>Bacteria</taxon>
        <taxon>Pseudomonadati</taxon>
        <taxon>Pseudomonadota</taxon>
        <taxon>Gammaproteobacteria</taxon>
        <taxon>Enterobacterales</taxon>
        <taxon>Enterobacteriaceae</taxon>
        <taxon>Escherichia</taxon>
    </lineage>
</organism>
<evidence type="ECO:0000255" key="1">
    <source>
        <dbReference type="HAMAP-Rule" id="MF_01423"/>
    </source>
</evidence>
<evidence type="ECO:0000269" key="2">
    <source>
    </source>
</evidence>
<evidence type="ECO:0000269" key="3">
    <source>
    </source>
</evidence>
<accession>P76398</accession>
<accession>O08005</accession>
<feature type="chain" id="PRO_0000161821" description="Multidrug resistance protein MdtB">
    <location>
        <begin position="1"/>
        <end position="1040"/>
    </location>
</feature>
<feature type="transmembrane region" description="Helical" evidence="1">
    <location>
        <begin position="15"/>
        <end position="37"/>
    </location>
</feature>
<feature type="transmembrane region" description="Helical" evidence="1">
    <location>
        <begin position="345"/>
        <end position="362"/>
    </location>
</feature>
<feature type="transmembrane region" description="Helical" evidence="1">
    <location>
        <begin position="367"/>
        <end position="389"/>
    </location>
</feature>
<feature type="transmembrane region" description="Helical" evidence="1">
    <location>
        <begin position="396"/>
        <end position="418"/>
    </location>
</feature>
<feature type="transmembrane region" description="Helical" evidence="1">
    <location>
        <begin position="438"/>
        <end position="460"/>
    </location>
</feature>
<feature type="transmembrane region" description="Helical" evidence="1">
    <location>
        <begin position="472"/>
        <end position="494"/>
    </location>
</feature>
<feature type="transmembrane region" description="Helical" evidence="1">
    <location>
        <begin position="535"/>
        <end position="557"/>
    </location>
</feature>
<feature type="transmembrane region" description="Helical" evidence="1">
    <location>
        <begin position="867"/>
        <end position="889"/>
    </location>
</feature>
<feature type="transmembrane region" description="Helical" evidence="1">
    <location>
        <begin position="909"/>
        <end position="931"/>
    </location>
</feature>
<feature type="transmembrane region" description="Helical" evidence="1">
    <location>
        <begin position="968"/>
        <end position="990"/>
    </location>
</feature>
<feature type="transmembrane region" description="Helical" evidence="1">
    <location>
        <begin position="1000"/>
        <end position="1022"/>
    </location>
</feature>
<dbReference type="EMBL" id="AB089188">
    <property type="protein sequence ID" value="BAC06608.1"/>
    <property type="molecule type" value="Genomic_DNA"/>
</dbReference>
<dbReference type="EMBL" id="U00096">
    <property type="protein sequence ID" value="AAC75136.1"/>
    <property type="molecule type" value="Genomic_DNA"/>
</dbReference>
<dbReference type="EMBL" id="AP009048">
    <property type="protein sequence ID" value="BAA15929.1"/>
    <property type="molecule type" value="Genomic_DNA"/>
</dbReference>
<dbReference type="PIR" id="B64974">
    <property type="entry name" value="B64974"/>
</dbReference>
<dbReference type="RefSeq" id="NP_416579.1">
    <property type="nucleotide sequence ID" value="NC_000913.3"/>
</dbReference>
<dbReference type="RefSeq" id="WP_001197875.1">
    <property type="nucleotide sequence ID" value="NZ_STEB01000002.1"/>
</dbReference>
<dbReference type="SMR" id="P76398"/>
<dbReference type="BioGRID" id="4262010">
    <property type="interactions" value="465"/>
</dbReference>
<dbReference type="ComplexPortal" id="CPX-2119">
    <property type="entry name" value="MdtABC-TolC multidrug efflux transport complex"/>
</dbReference>
<dbReference type="DIP" id="DIP-11884N"/>
<dbReference type="FunCoup" id="P76398">
    <property type="interactions" value="667"/>
</dbReference>
<dbReference type="IntAct" id="P76398">
    <property type="interactions" value="3"/>
</dbReference>
<dbReference type="STRING" id="511145.b2075"/>
<dbReference type="CARD" id="ARO:3000793">
    <property type="molecule name" value="mdtB"/>
    <property type="mechanism identifier" value="ARO:0010000"/>
    <property type="mechanism name" value="antibiotic efflux"/>
</dbReference>
<dbReference type="TCDB" id="2.A.6.2.12">
    <property type="family name" value="the resistance-nodulation-cell division (rnd) superfamily"/>
</dbReference>
<dbReference type="jPOST" id="P76398"/>
<dbReference type="PaxDb" id="511145-b2075"/>
<dbReference type="EnsemblBacteria" id="AAC75136">
    <property type="protein sequence ID" value="AAC75136"/>
    <property type="gene ID" value="b2075"/>
</dbReference>
<dbReference type="GeneID" id="946606"/>
<dbReference type="KEGG" id="ecj:JW2060"/>
<dbReference type="KEGG" id="eco:b2075"/>
<dbReference type="KEGG" id="ecoc:C3026_11670"/>
<dbReference type="PATRIC" id="fig|511145.12.peg.2152"/>
<dbReference type="EchoBASE" id="EB3810"/>
<dbReference type="eggNOG" id="COG0841">
    <property type="taxonomic scope" value="Bacteria"/>
</dbReference>
<dbReference type="HOGENOM" id="CLU_002755_1_2_6"/>
<dbReference type="InParanoid" id="P76398"/>
<dbReference type="OMA" id="VPMMCAK"/>
<dbReference type="OrthoDB" id="9757904at2"/>
<dbReference type="PhylomeDB" id="P76398"/>
<dbReference type="BioCyc" id="EcoCyc:B2075-MONOMER"/>
<dbReference type="BioCyc" id="MetaCyc:B2075-MONOMER"/>
<dbReference type="PRO" id="PR:P76398"/>
<dbReference type="Proteomes" id="UP000000625">
    <property type="component" value="Chromosome"/>
</dbReference>
<dbReference type="GO" id="GO:1990281">
    <property type="term" value="C:efflux pump complex"/>
    <property type="evidence" value="ECO:0000314"/>
    <property type="project" value="EcoCyc"/>
</dbReference>
<dbReference type="GO" id="GO:0098567">
    <property type="term" value="C:periplasmic side of plasma membrane"/>
    <property type="evidence" value="ECO:0000303"/>
    <property type="project" value="ComplexPortal"/>
</dbReference>
<dbReference type="GO" id="GO:0005886">
    <property type="term" value="C:plasma membrane"/>
    <property type="evidence" value="ECO:0000314"/>
    <property type="project" value="EcoCyc"/>
</dbReference>
<dbReference type="GO" id="GO:0015125">
    <property type="term" value="F:bile acid transmembrane transporter activity"/>
    <property type="evidence" value="ECO:0000315"/>
    <property type="project" value="EcoCyc"/>
</dbReference>
<dbReference type="GO" id="GO:0042910">
    <property type="term" value="F:xenobiotic transmembrane transporter activity"/>
    <property type="evidence" value="ECO:0000318"/>
    <property type="project" value="GO_Central"/>
</dbReference>
<dbReference type="GO" id="GO:0015721">
    <property type="term" value="P:bile acid and bile salt transport"/>
    <property type="evidence" value="ECO:0000315"/>
    <property type="project" value="EcoCyc"/>
</dbReference>
<dbReference type="GO" id="GO:0140330">
    <property type="term" value="P:xenobiotic detoxification by transmembrane export across the cell outer membrane"/>
    <property type="evidence" value="ECO:0000303"/>
    <property type="project" value="ComplexPortal"/>
</dbReference>
<dbReference type="GO" id="GO:0042908">
    <property type="term" value="P:xenobiotic transport"/>
    <property type="evidence" value="ECO:0000315"/>
    <property type="project" value="EcoCyc"/>
</dbReference>
<dbReference type="FunFam" id="1.20.1640.10:FF:000001">
    <property type="entry name" value="Efflux pump membrane transporter"/>
    <property type="match status" value="1"/>
</dbReference>
<dbReference type="FunFam" id="3.30.70.1430:FF:000001">
    <property type="entry name" value="Efflux pump membrane transporter"/>
    <property type="match status" value="1"/>
</dbReference>
<dbReference type="FunFam" id="3.30.2090.10:FF:000003">
    <property type="entry name" value="Multidrug resistance protein MdtB"/>
    <property type="match status" value="1"/>
</dbReference>
<dbReference type="FunFam" id="3.30.2090.10:FF:000006">
    <property type="entry name" value="Multidrug resistance protein MdtB"/>
    <property type="match status" value="1"/>
</dbReference>
<dbReference type="Gene3D" id="3.30.70.1430">
    <property type="entry name" value="Multidrug efflux transporter AcrB pore domain"/>
    <property type="match status" value="2"/>
</dbReference>
<dbReference type="Gene3D" id="3.30.70.1440">
    <property type="entry name" value="Multidrug efflux transporter AcrB pore domain"/>
    <property type="match status" value="1"/>
</dbReference>
<dbReference type="Gene3D" id="3.30.70.1320">
    <property type="entry name" value="Multidrug efflux transporter AcrB pore domain like"/>
    <property type="match status" value="1"/>
</dbReference>
<dbReference type="Gene3D" id="3.30.2090.10">
    <property type="entry name" value="Multidrug efflux transporter AcrB TolC docking domain, DN and DC subdomains"/>
    <property type="match status" value="2"/>
</dbReference>
<dbReference type="Gene3D" id="1.20.1640.10">
    <property type="entry name" value="Multidrug efflux transporter AcrB transmembrane domain"/>
    <property type="match status" value="2"/>
</dbReference>
<dbReference type="HAMAP" id="MF_01423">
    <property type="entry name" value="MdtB"/>
    <property type="match status" value="1"/>
</dbReference>
<dbReference type="InterPro" id="IPR027463">
    <property type="entry name" value="AcrB_DN_DC_subdom"/>
</dbReference>
<dbReference type="InterPro" id="IPR001036">
    <property type="entry name" value="Acrflvin-R"/>
</dbReference>
<dbReference type="InterPro" id="IPR022831">
    <property type="entry name" value="Multidrug-R_MdtB"/>
</dbReference>
<dbReference type="NCBIfam" id="NF007798">
    <property type="entry name" value="PRK10503.1"/>
    <property type="match status" value="1"/>
</dbReference>
<dbReference type="NCBIfam" id="NF033617">
    <property type="entry name" value="RND_permease_2"/>
    <property type="match status" value="1"/>
</dbReference>
<dbReference type="PANTHER" id="PTHR32063">
    <property type="match status" value="1"/>
</dbReference>
<dbReference type="PANTHER" id="PTHR32063:SF21">
    <property type="entry name" value="MULTIDRUG RESISTANCE PROTEIN MDTB"/>
    <property type="match status" value="1"/>
</dbReference>
<dbReference type="Pfam" id="PF00873">
    <property type="entry name" value="ACR_tran"/>
    <property type="match status" value="1"/>
</dbReference>
<dbReference type="PRINTS" id="PR00702">
    <property type="entry name" value="ACRIFLAVINRP"/>
</dbReference>
<dbReference type="SUPFAM" id="SSF82693">
    <property type="entry name" value="Multidrug efflux transporter AcrB pore domain, PN1, PN2, PC1 and PC2 subdomains"/>
    <property type="match status" value="3"/>
</dbReference>
<dbReference type="SUPFAM" id="SSF82714">
    <property type="entry name" value="Multidrug efflux transporter AcrB TolC docking domain, DN and DC subdomains"/>
    <property type="match status" value="2"/>
</dbReference>
<dbReference type="SUPFAM" id="SSF82866">
    <property type="entry name" value="Multidrug efflux transporter AcrB transmembrane domain"/>
    <property type="match status" value="2"/>
</dbReference>
<proteinExistence type="evidence at protein level"/>
<sequence>MQVLPPSSTGGPSRLFIMRPVATTLLMVAILLAGIIGYRALPVSALPEVDYPTIQVVTLYPGASPDVMTSAVTAPLERQFGQMSGLKQMSSQSSGGASVITLQFQLTLPLDVAEQEVQAAINAATNLLPSDLPNPPVYSKVNPADPPIMTLAVTSTAMPMTQVEDMVETRVAQKISQISGVGLVTLSGGQRPAVRVKLNAQAIAALGLTSETVRTAITGANVNSAKGSLDGPSRAVTLSANDQMQSAEEYRQLIIAYQNGAPIRLGDVATVEQGAENSWLGAWANKEQAIVMNVQRQPGANIISTADSIRQMLPQLTESLPKSVKVTVLSDRTTNIRASVDDTQFELMMAIALVVMIIYLFLRNIPATIIPGVAVPLSLIGTFAVMVFLDFSINNLTLMALTIATGFVVDDAIVVIENISRYIEKGEKPLAAALKGAGEIGFTIISLTFSLIAVLIPLLFMGDIVGRLFREFAITLAVAILISAVVSLTLTPMMCARMLSQESLRKQNRFSRASEKMFDRIIAAYGRGLAKVLNHPWLTLSVALSTLLLSVLLWVFIPKGFFPVQDNGIIQGTLQAPQSSSFANMAQRQRQVADVILQDPAVQSLTSFVGVDGTNPSLNSARLQINLKPLDERDDRVQKVIARLQTAVDKVPGVDLFLQPTQDLTIDTQVSRTQYQFTLQATSLDALSTWVPQLMEKLQQLPQLSDVSSDWQDKGLVAYVNVDRDSASRLGISMADVDNALYNAFGQRLISTIYTQANQYRVVLEHNTENTPGLAALDTIRLTSSDGGVVPLSSIAKIEQRFAPLSINHLDQFPVTTISFNVPDNYSLGDAVQAIMDTEKTLNLPVDITTQFQGSTLAFQSALGSTVWLIVAAVVAMYIVLGILYESFIHPITILSTLPTAGVGALLALLIAGSELDVIAIIGIILLIGIVKKNAIMMIDFALAAEREQGMSPREAIYQACLLRFRPILMTTLAALLGALPLMLSTGVGAELRRPLGIGMVGGLIVSQVLTLFTTPVIYLLFDRLALWTKSRFARHEEEA</sequence>
<name>MDTB_ECOLI</name>
<keyword id="KW-0997">Cell inner membrane</keyword>
<keyword id="KW-1003">Cell membrane</keyword>
<keyword id="KW-0472">Membrane</keyword>
<keyword id="KW-1185">Reference proteome</keyword>
<keyword id="KW-0812">Transmembrane</keyword>
<keyword id="KW-1133">Transmembrane helix</keyword>
<keyword id="KW-0813">Transport</keyword>
<gene>
    <name evidence="1" type="primary">mdtB</name>
    <name type="synonym">yegN</name>
    <name type="ordered locus">b2075</name>
    <name type="ordered locus">JW2060</name>
</gene>
<protein>
    <recommendedName>
        <fullName evidence="1">Multidrug resistance protein MdtB</fullName>
    </recommendedName>
    <alternativeName>
        <fullName evidence="1">Multidrug transporter MdtB</fullName>
    </alternativeName>
</protein>
<reference key="1">
    <citation type="journal article" date="2002" name="J. Bacteriol.">
        <title>The putative response regulator BaeR stimulates multidrug resistance of Escherichia coli via a novel multidrug exporter system, MdtABC.</title>
        <authorList>
            <person name="Nagakubo S."/>
            <person name="Nishino K."/>
            <person name="Hirata T."/>
            <person name="Yamaguchi A."/>
        </authorList>
    </citation>
    <scope>NUCLEOTIDE SEQUENCE [GENOMIC DNA]</scope>
    <scope>FUNCTION</scope>
    <scope>INDUCTION</scope>
    <source>
        <strain>K12</strain>
    </source>
</reference>
<reference key="2">
    <citation type="journal article" date="1996" name="DNA Res.">
        <title>A 460-kb DNA sequence of the Escherichia coli K-12 genome corresponding to the 40.1-50.0 min region on the linkage map.</title>
        <authorList>
            <person name="Itoh T."/>
            <person name="Aiba H."/>
            <person name="Baba T."/>
            <person name="Fujita K."/>
            <person name="Hayashi K."/>
            <person name="Inada T."/>
            <person name="Isono K."/>
            <person name="Kasai H."/>
            <person name="Kimura S."/>
            <person name="Kitakawa M."/>
            <person name="Kitagawa M."/>
            <person name="Makino K."/>
            <person name="Miki T."/>
            <person name="Mizobuchi K."/>
            <person name="Mori H."/>
            <person name="Mori T."/>
            <person name="Motomura K."/>
            <person name="Nakade S."/>
            <person name="Nakamura Y."/>
            <person name="Nashimoto H."/>
            <person name="Nishio Y."/>
            <person name="Oshima T."/>
            <person name="Saito N."/>
            <person name="Sampei G."/>
            <person name="Seki Y."/>
            <person name="Sivasundaram S."/>
            <person name="Tagami H."/>
            <person name="Takeda J."/>
            <person name="Takemoto K."/>
            <person name="Wada C."/>
            <person name="Yamamoto Y."/>
            <person name="Horiuchi T."/>
        </authorList>
    </citation>
    <scope>NUCLEOTIDE SEQUENCE [LARGE SCALE GENOMIC DNA]</scope>
    <source>
        <strain>K12 / W3110 / ATCC 27325 / DSM 5911</strain>
    </source>
</reference>
<reference key="3">
    <citation type="journal article" date="1997" name="Science">
        <title>The complete genome sequence of Escherichia coli K-12.</title>
        <authorList>
            <person name="Blattner F.R."/>
            <person name="Plunkett G. III"/>
            <person name="Bloch C.A."/>
            <person name="Perna N.T."/>
            <person name="Burland V."/>
            <person name="Riley M."/>
            <person name="Collado-Vides J."/>
            <person name="Glasner J.D."/>
            <person name="Rode C.K."/>
            <person name="Mayhew G.F."/>
            <person name="Gregor J."/>
            <person name="Davis N.W."/>
            <person name="Kirkpatrick H.A."/>
            <person name="Goeden M.A."/>
            <person name="Rose D.J."/>
            <person name="Mau B."/>
            <person name="Shao Y."/>
        </authorList>
    </citation>
    <scope>NUCLEOTIDE SEQUENCE [LARGE SCALE GENOMIC DNA]</scope>
    <source>
        <strain>K12 / MG1655 / ATCC 47076</strain>
    </source>
</reference>
<reference key="4">
    <citation type="journal article" date="2006" name="Mol. Syst. Biol.">
        <title>Highly accurate genome sequences of Escherichia coli K-12 strains MG1655 and W3110.</title>
        <authorList>
            <person name="Hayashi K."/>
            <person name="Morooka N."/>
            <person name="Yamamoto Y."/>
            <person name="Fujita K."/>
            <person name="Isono K."/>
            <person name="Choi S."/>
            <person name="Ohtsubo E."/>
            <person name="Baba T."/>
            <person name="Wanner B.L."/>
            <person name="Mori H."/>
            <person name="Horiuchi T."/>
        </authorList>
    </citation>
    <scope>NUCLEOTIDE SEQUENCE [LARGE SCALE GENOMIC DNA]</scope>
    <source>
        <strain>K12 / W3110 / ATCC 27325 / DSM 5911</strain>
    </source>
</reference>
<reference key="5">
    <citation type="journal article" date="2002" name="J. Bacteriol.">
        <title>The baeSR two-component regulatory system activates transcription of the yegMNOB (mdtABCD) transporter gene cluster in Escherichia coli and increases its resistance to novobiocin and deoxycholate.</title>
        <authorList>
            <person name="Baranova N."/>
            <person name="Nikaido H."/>
        </authorList>
    </citation>
    <scope>FUNCTION</scope>
    <scope>INDUCTION</scope>
</reference>